<protein>
    <recommendedName>
        <fullName>GDP/UDP-N,N'-diacetylbacillosamine 2-epimerase (hydrolyzing)</fullName>
        <ecNumber>3.2.1.184</ecNumber>
    </recommendedName>
</protein>
<accession>Q0P8T0</accession>
<comment type="function">
    <text evidence="1">Involved in biosynthesis of legionaminic acid (5,7-diamino-3,5,7,9-tetradeoxy-D-glycero-D-galacto-non-2-ulosonic acid)(Leg), a sialic acid-like derivative that is incorporated into flagellin via O-linkage to Ser/Thr. Catalyzes the conversion of GDP-N,N'-diacetylbacillosamine (Bac2Ac4Ac) into 2,4-diacetamido-2,4,6-trideoxymannose and GDP. It can also use UDP-N,N'-diacetylbacillosamine however it generates small quantities of 2,4-diacetamido-2,4,6-trideoxymannose.</text>
</comment>
<comment type="catalytic activity">
    <reaction evidence="1">
        <text>GDP-N,N'-diacetylbacillosamine + H2O = 2,4-diacetamido-2,4,6-trideoxy-alpha-D-mannopyranose + GDP + H(+)</text>
        <dbReference type="Rhea" id="RHEA:46316"/>
        <dbReference type="ChEBI" id="CHEBI:15377"/>
        <dbReference type="ChEBI" id="CHEBI:15378"/>
        <dbReference type="ChEBI" id="CHEBI:58189"/>
        <dbReference type="ChEBI" id="CHEBI:68645"/>
        <dbReference type="ChEBI" id="CHEBI:86016"/>
        <dbReference type="EC" id="3.2.1.184"/>
    </reaction>
</comment>
<comment type="catalytic activity">
    <reaction evidence="1">
        <text>UDP-N,N'-diacetylbacillosamine + H2O = 2,4-diacetamido-2,4,6-trideoxy-alpha-D-mannopyranose + UDP + H(+)</text>
        <dbReference type="Rhea" id="RHEA:34491"/>
        <dbReference type="ChEBI" id="CHEBI:15377"/>
        <dbReference type="ChEBI" id="CHEBI:15378"/>
        <dbReference type="ChEBI" id="CHEBI:58223"/>
        <dbReference type="ChEBI" id="CHEBI:67134"/>
        <dbReference type="ChEBI" id="CHEBI:68645"/>
        <dbReference type="EC" id="3.2.1.184"/>
    </reaction>
</comment>
<comment type="similarity">
    <text evidence="2">Belongs to the UDP-N-acetylglucosamine 2-epimerase family.</text>
</comment>
<keyword id="KW-1005">Bacterial flagellum biogenesis</keyword>
<keyword id="KW-0378">Hydrolase</keyword>
<keyword id="KW-1185">Reference proteome</keyword>
<feature type="chain" id="PRO_0000424191" description="GDP/UDP-N,N'-diacetylbacillosamine 2-epimerase (hydrolyzing)">
    <location>
        <begin position="1"/>
        <end position="384"/>
    </location>
</feature>
<evidence type="ECO:0000269" key="1">
    <source>
    </source>
</evidence>
<evidence type="ECO:0000305" key="2"/>
<dbReference type="EC" id="3.2.1.184"/>
<dbReference type="EMBL" id="AL111168">
    <property type="protein sequence ID" value="CAL35441.1"/>
    <property type="molecule type" value="Genomic_DNA"/>
</dbReference>
<dbReference type="PIR" id="E81276">
    <property type="entry name" value="E81276"/>
</dbReference>
<dbReference type="RefSeq" id="WP_002858369.1">
    <property type="nucleotide sequence ID" value="NZ_SZUC01000001.1"/>
</dbReference>
<dbReference type="RefSeq" id="YP_002344717.1">
    <property type="nucleotide sequence ID" value="NC_002163.1"/>
</dbReference>
<dbReference type="SMR" id="Q0P8T0"/>
<dbReference type="IntAct" id="Q0P8T0">
    <property type="interactions" value="20"/>
</dbReference>
<dbReference type="STRING" id="192222.Cj1328"/>
<dbReference type="PaxDb" id="192222-Cj1328"/>
<dbReference type="EnsemblBacteria" id="CAL35441">
    <property type="protein sequence ID" value="CAL35441"/>
    <property type="gene ID" value="Cj1328"/>
</dbReference>
<dbReference type="GeneID" id="905620"/>
<dbReference type="KEGG" id="cje:Cj1328"/>
<dbReference type="PATRIC" id="fig|192222.6.peg.1310"/>
<dbReference type="eggNOG" id="COG0381">
    <property type="taxonomic scope" value="Bacteria"/>
</dbReference>
<dbReference type="HOGENOM" id="CLU_061127_0_0_7"/>
<dbReference type="OrthoDB" id="9803238at2"/>
<dbReference type="BioCyc" id="MetaCyc:MONOMER-16352"/>
<dbReference type="Proteomes" id="UP000000799">
    <property type="component" value="Chromosome"/>
</dbReference>
<dbReference type="GO" id="GO:0102224">
    <property type="term" value="F:GDP-2,4-diacetamido-2,4,6-trideoxy-alpha-D-glucopyranose hydrolase/2-epimerase activity"/>
    <property type="evidence" value="ECO:0007669"/>
    <property type="project" value="RHEA"/>
</dbReference>
<dbReference type="GO" id="GO:0004553">
    <property type="term" value="F:hydrolase activity, hydrolyzing O-glycosyl compounds"/>
    <property type="evidence" value="ECO:0000314"/>
    <property type="project" value="UniProtKB"/>
</dbReference>
<dbReference type="GO" id="GO:0102388">
    <property type="term" value="F:UDP-N,N'-diacetylbacillosamine 2-epimerase activity"/>
    <property type="evidence" value="ECO:0007669"/>
    <property type="project" value="UniProtKB-EC"/>
</dbReference>
<dbReference type="GO" id="GO:0044781">
    <property type="term" value="P:bacterial-type flagellum organization"/>
    <property type="evidence" value="ECO:0007669"/>
    <property type="project" value="UniProtKB-KW"/>
</dbReference>
<dbReference type="GO" id="GO:0016051">
    <property type="term" value="P:carbohydrate biosynthetic process"/>
    <property type="evidence" value="ECO:0000314"/>
    <property type="project" value="UniProtKB"/>
</dbReference>
<dbReference type="GO" id="GO:0006047">
    <property type="term" value="P:UDP-N-acetylglucosamine metabolic process"/>
    <property type="evidence" value="ECO:0007669"/>
    <property type="project" value="InterPro"/>
</dbReference>
<dbReference type="CDD" id="cd03786">
    <property type="entry name" value="GTB_UDP-GlcNAc_2-Epimerase"/>
    <property type="match status" value="1"/>
</dbReference>
<dbReference type="Gene3D" id="3.40.50.2000">
    <property type="entry name" value="Glycogen Phosphorylase B"/>
    <property type="match status" value="2"/>
</dbReference>
<dbReference type="InterPro" id="IPR020004">
    <property type="entry name" value="UDP-GlcNAc_Epase"/>
</dbReference>
<dbReference type="InterPro" id="IPR003331">
    <property type="entry name" value="UDP_GlcNAc_Epimerase_2_dom"/>
</dbReference>
<dbReference type="InterPro" id="IPR029767">
    <property type="entry name" value="WecB-like"/>
</dbReference>
<dbReference type="NCBIfam" id="TIGR03568">
    <property type="entry name" value="NeuC_NnaA"/>
    <property type="match status" value="1"/>
</dbReference>
<dbReference type="PANTHER" id="PTHR43174">
    <property type="entry name" value="UDP-N-ACETYLGLUCOSAMINE 2-EPIMERASE"/>
    <property type="match status" value="1"/>
</dbReference>
<dbReference type="PANTHER" id="PTHR43174:SF3">
    <property type="entry name" value="UDP-N-ACETYLGLUCOSAMINE 2-EPIMERASE"/>
    <property type="match status" value="1"/>
</dbReference>
<dbReference type="Pfam" id="PF02350">
    <property type="entry name" value="Epimerase_2"/>
    <property type="match status" value="1"/>
</dbReference>
<dbReference type="SUPFAM" id="SSF53756">
    <property type="entry name" value="UDP-Glycosyltransferase/glycogen phosphorylase"/>
    <property type="match status" value="1"/>
</dbReference>
<gene>
    <name type="primary">legG</name>
    <name type="synonym">neuC2</name>
    <name type="ordered locus">Cj1328</name>
</gene>
<reference key="1">
    <citation type="journal article" date="2000" name="Nature">
        <title>The genome sequence of the food-borne pathogen Campylobacter jejuni reveals hypervariable sequences.</title>
        <authorList>
            <person name="Parkhill J."/>
            <person name="Wren B.W."/>
            <person name="Mungall K.L."/>
            <person name="Ketley J.M."/>
            <person name="Churcher C.M."/>
            <person name="Basham D."/>
            <person name="Chillingworth T."/>
            <person name="Davies R.M."/>
            <person name="Feltwell T."/>
            <person name="Holroyd S."/>
            <person name="Jagels K."/>
            <person name="Karlyshev A.V."/>
            <person name="Moule S."/>
            <person name="Pallen M.J."/>
            <person name="Penn C.W."/>
            <person name="Quail M.A."/>
            <person name="Rajandream M.A."/>
            <person name="Rutherford K.M."/>
            <person name="van Vliet A.H.M."/>
            <person name="Whitehead S."/>
            <person name="Barrell B.G."/>
        </authorList>
    </citation>
    <scope>NUCLEOTIDE SEQUENCE [LARGE SCALE GENOMIC DNA]</scope>
    <source>
        <strain>ATCC 700819 / NCTC 11168</strain>
    </source>
</reference>
<reference key="2">
    <citation type="journal article" date="2009" name="Glycobiology">
        <title>The CMP-legionaminic acid pathway in Campylobacter: biosynthesis involving novel GDP-linked precursors.</title>
        <authorList>
            <person name="Schoenhofen I.C."/>
            <person name="Vinogradov E."/>
            <person name="Whitfield D.M."/>
            <person name="Brisson J.R."/>
            <person name="Logan S.M."/>
        </authorList>
    </citation>
    <scope>FUNCTION</scope>
    <scope>CATALYTIC ACTIVITY</scope>
    <scope>SUBSTRATE SPECIFICITY</scope>
    <scope>NOMENCLATURE</scope>
    <source>
        <strain>ATCC 700819 / NCTC 11168</strain>
    </source>
</reference>
<proteinExistence type="evidence at protein level"/>
<name>NEUCH_CAMJE</name>
<organism>
    <name type="scientific">Campylobacter jejuni subsp. jejuni serotype O:2 (strain ATCC 700819 / NCTC 11168)</name>
    <dbReference type="NCBI Taxonomy" id="192222"/>
    <lineage>
        <taxon>Bacteria</taxon>
        <taxon>Pseudomonadati</taxon>
        <taxon>Campylobacterota</taxon>
        <taxon>Epsilonproteobacteria</taxon>
        <taxon>Campylobacterales</taxon>
        <taxon>Campylobacteraceae</taxon>
        <taxon>Campylobacter</taxon>
    </lineage>
</organism>
<sequence length="384" mass="43766">MSKRKICIVSATRAEWYLLRNLCHEIQNDKDLSLQIIATGAHLSPEFGLTYKEIEKEFKITKKIPILLANDDKISLCKSMSLAFSAFSDAFEDLKPDMVVILGDRYEMLSVASVCLLMHIPLVHLCGGELTLGAIDDSIRHSISKMSHLHFVSHEIYKKRLLQLGEEEKRVFNIGSLASTIIKNMNFLNKKDLEKALEMKLDKELYLITYHPLTLNVKNTQKEIKTLLKKLDTLKNASLIFTKANADENGLLINEILQNYCQKNSHKAKLFDNLGSQKYLSLMKIAKAMIGNSSSGISESPFFKTPCINIGDRQKGRLRTQNIIDSEINDLDQAFEKLESKEFKQNLKNFKNPYDNGKNPNKIIKTCLKNVNLDTILHKNFIDL</sequence>